<reference key="1">
    <citation type="journal article" date="2007" name="Mol. Phylogenet. Evol.">
        <title>Phylogenetic and evolutionary implications of complete chloroplast genome sequences of four early-diverging angiosperms: Buxus (Buxaceae), Chloranthus (Chloranthaceae), Dioscorea (Dioscoreaceae), and Illicium (Schisandraceae).</title>
        <authorList>
            <person name="Hansen D.R."/>
            <person name="Dastidar S.G."/>
            <person name="Cai Z."/>
            <person name="Penaflor C."/>
            <person name="Kuehl J.V."/>
            <person name="Boore J.L."/>
            <person name="Jansen R.K."/>
        </authorList>
    </citation>
    <scope>NUCLEOTIDE SEQUENCE [LARGE SCALE GENOMIC DNA]</scope>
</reference>
<geneLocation type="chloroplast"/>
<sequence>MEVNILAFIATALFILVPTAFLLIIYVKTVSQND</sequence>
<organism>
    <name type="scientific">Dioscorea elephantipes</name>
    <name type="common">Elephant's foot yam</name>
    <name type="synonym">Testudinaria elephantipes</name>
    <dbReference type="NCBI Taxonomy" id="145284"/>
    <lineage>
        <taxon>Eukaryota</taxon>
        <taxon>Viridiplantae</taxon>
        <taxon>Streptophyta</taxon>
        <taxon>Embryophyta</taxon>
        <taxon>Tracheophyta</taxon>
        <taxon>Spermatophyta</taxon>
        <taxon>Magnoliopsida</taxon>
        <taxon>Liliopsida</taxon>
        <taxon>Dioscoreales</taxon>
        <taxon>Dioscoreaceae</taxon>
        <taxon>Dioscorea</taxon>
    </lineage>
</organism>
<keyword id="KW-0150">Chloroplast</keyword>
<keyword id="KW-0472">Membrane</keyword>
<keyword id="KW-0602">Photosynthesis</keyword>
<keyword id="KW-0604">Photosystem II</keyword>
<keyword id="KW-0934">Plastid</keyword>
<keyword id="KW-0674">Reaction center</keyword>
<keyword id="KW-0793">Thylakoid</keyword>
<keyword id="KW-0812">Transmembrane</keyword>
<keyword id="KW-1133">Transmembrane helix</keyword>
<evidence type="ECO:0000255" key="1">
    <source>
        <dbReference type="HAMAP-Rule" id="MF_00438"/>
    </source>
</evidence>
<proteinExistence type="inferred from homology"/>
<gene>
    <name evidence="1" type="primary">psbM</name>
</gene>
<protein>
    <recommendedName>
        <fullName evidence="1">Photosystem II reaction center protein M</fullName>
        <shortName evidence="1">PSII-M</shortName>
    </recommendedName>
</protein>
<accession>A6MMK1</accession>
<comment type="function">
    <text evidence="1">One of the components of the core complex of photosystem II (PSII). PSII is a light-driven water:plastoquinone oxidoreductase that uses light energy to abstract electrons from H(2)O, generating O(2) and a proton gradient subsequently used for ATP formation. It consists of a core antenna complex that captures photons, and an electron transfer chain that converts photonic excitation into a charge separation. This subunit is found at the monomer-monomer interface.</text>
</comment>
<comment type="subunit">
    <text evidence="1">PSII is composed of 1 copy each of membrane proteins PsbA, PsbB, PsbC, PsbD, PsbE, PsbF, PsbH, PsbI, PsbJ, PsbK, PsbL, PsbM, PsbT, PsbX, PsbY, PsbZ, Psb30/Ycf12, at least 3 peripheral proteins of the oxygen-evolving complex and a large number of cofactors. It forms dimeric complexes.</text>
</comment>
<comment type="subcellular location">
    <subcellularLocation>
        <location evidence="1">Plastid</location>
        <location evidence="1">Chloroplast thylakoid membrane</location>
        <topology evidence="1">Single-pass membrane protein</topology>
    </subcellularLocation>
</comment>
<comment type="similarity">
    <text evidence="1">Belongs to the PsbM family.</text>
</comment>
<name>PSBM_DIOEL</name>
<dbReference type="EMBL" id="EF380353">
    <property type="protein sequence ID" value="ABR01424.1"/>
    <property type="molecule type" value="Genomic_DNA"/>
</dbReference>
<dbReference type="RefSeq" id="YP_001294346.1">
    <property type="nucleotide sequence ID" value="NC_009601.1"/>
</dbReference>
<dbReference type="SMR" id="A6MMK1"/>
<dbReference type="GeneID" id="5236678"/>
<dbReference type="GO" id="GO:0009535">
    <property type="term" value="C:chloroplast thylakoid membrane"/>
    <property type="evidence" value="ECO:0007669"/>
    <property type="project" value="UniProtKB-SubCell"/>
</dbReference>
<dbReference type="GO" id="GO:0009523">
    <property type="term" value="C:photosystem II"/>
    <property type="evidence" value="ECO:0007669"/>
    <property type="project" value="UniProtKB-KW"/>
</dbReference>
<dbReference type="GO" id="GO:0019684">
    <property type="term" value="P:photosynthesis, light reaction"/>
    <property type="evidence" value="ECO:0007669"/>
    <property type="project" value="InterPro"/>
</dbReference>
<dbReference type="HAMAP" id="MF_00438">
    <property type="entry name" value="PSII_PsbM"/>
    <property type="match status" value="1"/>
</dbReference>
<dbReference type="InterPro" id="IPR007826">
    <property type="entry name" value="PSII_PsbM"/>
</dbReference>
<dbReference type="InterPro" id="IPR037269">
    <property type="entry name" value="PSII_PsbM_sf"/>
</dbReference>
<dbReference type="NCBIfam" id="TIGR03038">
    <property type="entry name" value="PS_II_psbM"/>
    <property type="match status" value="1"/>
</dbReference>
<dbReference type="PANTHER" id="PTHR35774">
    <property type="entry name" value="PHOTOSYSTEM II REACTION CENTER PROTEIN M"/>
    <property type="match status" value="1"/>
</dbReference>
<dbReference type="PANTHER" id="PTHR35774:SF1">
    <property type="entry name" value="PHOTOSYSTEM II REACTION CENTER PROTEIN M"/>
    <property type="match status" value="1"/>
</dbReference>
<dbReference type="Pfam" id="PF05151">
    <property type="entry name" value="PsbM"/>
    <property type="match status" value="1"/>
</dbReference>
<dbReference type="SUPFAM" id="SSF161033">
    <property type="entry name" value="Photosystem II reaction center protein M, PsbM"/>
    <property type="match status" value="1"/>
</dbReference>
<feature type="chain" id="PRO_0000325732" description="Photosystem II reaction center protein M">
    <location>
        <begin position="1"/>
        <end position="34"/>
    </location>
</feature>
<feature type="transmembrane region" description="Helical" evidence="1">
    <location>
        <begin position="5"/>
        <end position="25"/>
    </location>
</feature>